<protein>
    <recommendedName>
        <fullName evidence="13">Protein BREAKING OF ASYMMETRY IN THE STOMATAL LINEAGE</fullName>
    </recommendedName>
</protein>
<proteinExistence type="evidence at protein level"/>
<accession>Q5BPF3</accession>
<accession>F4K0I7</accession>
<accession>Q5Q097</accession>
<accession>Q5Q098</accession>
<accession>Q9FJG8</accession>
<dbReference type="EMBL" id="AB015472">
    <property type="protein sequence ID" value="BAB10108.1"/>
    <property type="status" value="ALT_SEQ"/>
    <property type="molecule type" value="Genomic_DNA"/>
</dbReference>
<dbReference type="EMBL" id="AB008269">
    <property type="protein sequence ID" value="BAB10108.1"/>
    <property type="status" value="JOINED"/>
    <property type="molecule type" value="Genomic_DNA"/>
</dbReference>
<dbReference type="EMBL" id="CP002688">
    <property type="protein sequence ID" value="AED97391.1"/>
    <property type="molecule type" value="Genomic_DNA"/>
</dbReference>
<dbReference type="EMBL" id="CP002688">
    <property type="protein sequence ID" value="AED97392.1"/>
    <property type="molecule type" value="Genomic_DNA"/>
</dbReference>
<dbReference type="EMBL" id="AY800653">
    <property type="protein sequence ID" value="AAV68889.1"/>
    <property type="molecule type" value="mRNA"/>
</dbReference>
<dbReference type="EMBL" id="AY800654">
    <property type="protein sequence ID" value="AAV68890.1"/>
    <property type="molecule type" value="mRNA"/>
</dbReference>
<dbReference type="EMBL" id="AY924875">
    <property type="protein sequence ID" value="AAX23950.1"/>
    <property type="molecule type" value="mRNA"/>
</dbReference>
<dbReference type="RefSeq" id="NP_001032115.1">
    <molecule id="Q5BPF3-2"/>
    <property type="nucleotide sequence ID" value="NM_001037038.1"/>
</dbReference>
<dbReference type="RefSeq" id="NP_200896.1">
    <molecule id="Q5BPF3-1"/>
    <property type="nucleotide sequence ID" value="NM_125481.3"/>
</dbReference>
<dbReference type="BioGRID" id="21453">
    <property type="interactions" value="1"/>
</dbReference>
<dbReference type="FunCoup" id="Q5BPF3">
    <property type="interactions" value="5"/>
</dbReference>
<dbReference type="STRING" id="3702.Q5BPF3"/>
<dbReference type="GlyGen" id="Q5BPF3">
    <property type="glycosylation" value="1 site"/>
</dbReference>
<dbReference type="iPTMnet" id="Q5BPF3"/>
<dbReference type="PaxDb" id="3702-AT5G60880.1"/>
<dbReference type="ProteomicsDB" id="240814">
    <molecule id="Q5BPF3-1"/>
</dbReference>
<dbReference type="EnsemblPlants" id="AT5G60880.1">
    <molecule id="Q5BPF3-1"/>
    <property type="protein sequence ID" value="AT5G60880.1"/>
    <property type="gene ID" value="AT5G60880"/>
</dbReference>
<dbReference type="EnsemblPlants" id="AT5G60880.2">
    <molecule id="Q5BPF3-2"/>
    <property type="protein sequence ID" value="AT5G60880.2"/>
    <property type="gene ID" value="AT5G60880"/>
</dbReference>
<dbReference type="GeneID" id="836209"/>
<dbReference type="Gramene" id="AT5G60880.1">
    <molecule id="Q5BPF3-1"/>
    <property type="protein sequence ID" value="AT5G60880.1"/>
    <property type="gene ID" value="AT5G60880"/>
</dbReference>
<dbReference type="Gramene" id="AT5G60880.2">
    <molecule id="Q5BPF3-2"/>
    <property type="protein sequence ID" value="AT5G60880.2"/>
    <property type="gene ID" value="AT5G60880"/>
</dbReference>
<dbReference type="KEGG" id="ath:AT5G60880"/>
<dbReference type="Araport" id="AT5G60880"/>
<dbReference type="TAIR" id="AT5G60880">
    <property type="gene designation" value="BASL"/>
</dbReference>
<dbReference type="eggNOG" id="ENOG502S4M9">
    <property type="taxonomic scope" value="Eukaryota"/>
</dbReference>
<dbReference type="HOGENOM" id="CLU_110871_0_0_1"/>
<dbReference type="InParanoid" id="Q5BPF3"/>
<dbReference type="OMA" id="EDEWPPA"/>
<dbReference type="OrthoDB" id="1911716at2759"/>
<dbReference type="PhylomeDB" id="Q5BPF3"/>
<dbReference type="PRO" id="PR:Q5BPF3"/>
<dbReference type="Proteomes" id="UP000006548">
    <property type="component" value="Chromosome 5"/>
</dbReference>
<dbReference type="ExpressionAtlas" id="Q5BPF3">
    <property type="expression patterns" value="baseline and differential"/>
</dbReference>
<dbReference type="GO" id="GO:0005938">
    <property type="term" value="C:cell cortex"/>
    <property type="evidence" value="ECO:0000314"/>
    <property type="project" value="UniProtKB"/>
</dbReference>
<dbReference type="GO" id="GO:0019897">
    <property type="term" value="C:extrinsic component of plasma membrane"/>
    <property type="evidence" value="ECO:0000314"/>
    <property type="project" value="TAIR"/>
</dbReference>
<dbReference type="GO" id="GO:0005634">
    <property type="term" value="C:nucleus"/>
    <property type="evidence" value="ECO:0000314"/>
    <property type="project" value="UniProtKB"/>
</dbReference>
<dbReference type="GO" id="GO:0008356">
    <property type="term" value="P:asymmetric cell division"/>
    <property type="evidence" value="ECO:0000316"/>
    <property type="project" value="UniProtKB"/>
</dbReference>
<dbReference type="GO" id="GO:0009786">
    <property type="term" value="P:regulation of asymmetric cell division"/>
    <property type="evidence" value="ECO:0000315"/>
    <property type="project" value="TAIR"/>
</dbReference>
<dbReference type="GO" id="GO:0010374">
    <property type="term" value="P:stomatal complex development"/>
    <property type="evidence" value="ECO:0000315"/>
    <property type="project" value="TAIR"/>
</dbReference>
<dbReference type="GO" id="GO:0009826">
    <property type="term" value="P:unidimensional cell growth"/>
    <property type="evidence" value="ECO:0000315"/>
    <property type="project" value="TAIR"/>
</dbReference>
<dbReference type="InterPro" id="IPR040378">
    <property type="entry name" value="BASL"/>
</dbReference>
<dbReference type="PANTHER" id="PTHR33914">
    <property type="entry name" value="18S PRE-RIBOSOMAL ASSEMBLY PROTEIN GAR2-LIKE PROTEIN"/>
    <property type="match status" value="1"/>
</dbReference>
<dbReference type="PANTHER" id="PTHR33914:SF3">
    <property type="entry name" value="PROTEIN BREAKING OF ASYMMETRY IN THE STOMATAL LINEAGE"/>
    <property type="match status" value="1"/>
</dbReference>
<comment type="function">
    <text evidence="3 4 6 8 10 11">Regulates asymmetric cell division (ACD), especially in stomatal-lineage cells, probably by modulating accumulation and subcellular polarization of POLAR and SPCH (PubMed:25843888, PubMed:30429609). Mediates an attenuation of MAPK signaling upon polarization of POLAR and ASK7/BIN2 in stomatal lineage ground cells (SLGCs) undergoing ACD, and relieves BIN2 inhibition of SPCH in the nucleus (PubMed:25843888, PubMed:30429609). When phosphorylated, functions as a scaffold and recruits the MAPKKK YODA, MPK3 and MPK6 to spatially reorganize the MAPK signaling pathway at the cortex of cells undergoing ACD (PubMed:25843888). Cortical polarization leads to elevated nuclear MPK6 signaling and lowered SPCH abundance in one of the two daughter cells, thus differentiating the two daughter cells after ACD (PubMed:27746029).</text>
</comment>
<comment type="subunit">
    <text evidence="8 11">Component of a complex made of POLAR, BASL, ASK7/BIN2 and ASK3/SK12 (PubMed:30429609). Interacts with POLAR, ASK7/BIN2 and ASK3/SK12 (PubMed:30429609). Binds to YDA when phosphorylated (PubMed:25843888). Interacts with MPK6, MPK3 and MKK5 (PubMed:25843888).</text>
</comment>
<comment type="subcellular location">
    <subcellularLocation>
        <location evidence="8 9 11">Cytoplasm</location>
    </subcellularLocation>
    <subcellularLocation>
        <location evidence="1 3 5 8 9 10 11">Nucleus</location>
    </subcellularLocation>
    <subcellularLocation>
        <location evidence="3 5 8 9 10 11">Cytoplasm</location>
        <location evidence="3 5 8 9 10 11">Cell cortex</location>
    </subcellularLocation>
    <subcellularLocation>
        <location evidence="10">Cell membrane</location>
        <topology evidence="10">Peripheral membrane protein</topology>
    </subcellularLocation>
    <text evidence="3 5 8 9 10 11">Dynamic and highly polarized subcellular localization at the cortical polarity in a phosphorylation status-dependent manner (PubMed:19523675, PubMed:21903812, PubMed:25843888, PubMed:27422992, PubMed:27746029, PubMed:30429609). Polarity is only exhibited by one daughter cell after an asymmetric cell division (PubMed:27746029). ASK7/BIN2-mediated nuclear exclusion (PubMed:30429609). First localized to the nucleus in asymmetric cell division (ACD) precursors (PubMed:30429609). In asymmetrically dividing stomatal-lineage cells, before division, accumulates in a polarized crescent at the cell periphery (e.g. meristemoid mother cells (MMCs)), and, after division, localizes differentially to the nucleus (e.g. in meristemoids) and a peripheral crescent in self-renewing cells and their sisters (e.g. stomatal lineage ground cell (SLGC)) (PubMed:19523675, PubMed:25843888, PubMed:27422992, PubMed:30429609). Localized in the cell periphery at a position that minimizes the inverse distance from all points along the new division boundaries (PubMed:21903812).</text>
</comment>
<comment type="alternative products">
    <event type="alternative splicing"/>
    <isoform>
        <id>Q5BPF3-1</id>
        <name>1</name>
        <sequence type="displayed"/>
    </isoform>
    <isoform>
        <id>Q5BPF3-2</id>
        <name>2</name>
        <sequence type="described" ref="VSP_054867 VSP_054868"/>
    </isoform>
</comment>
<comment type="tissue specificity">
    <text evidence="3 9">Mostly expressed in stomatal lineage cells including asymmetrically dividing meristemoid mother cells (MMCs) and meristemoids, and, at lower levels, in their sisters (PubMed:19523675, PubMed:27422992). Also present in vasculature (PubMed:19523675). Expressed at low levels in the epidermal pavement cells (PubMed:27422992).</text>
</comment>
<comment type="developmental stage">
    <text evidence="3 10 11">First observed in nuclei of epidermal cells 16 hours post germination (PubMed:19523675). Later confined to cells undergoing asymmetric divisions (e.g. stomatal lineage cells) (PubMed:19523675). Expressed in protodermal cells in young seedlings (PubMed:30429609). Copolarizes with YDA and MPK3/MPK6 in stomatal asymmetric cell division (ACD) cells (PubMed:27746029).</text>
</comment>
<comment type="induction">
    <text evidence="7">Induced by MUTE in stomatal-lineage cells.</text>
</comment>
<comment type="PTM">
    <text evidence="8 10">Cortical localization of BASL requires phosphorylation mediated by MPK3 and MPK6 (PubMed:25843888). Phosphorylation promotes YDA binding (PubMed:25843888). Phosphorylation status modulates subcellular mobility (PubMed:27746029).</text>
</comment>
<comment type="disruption phenotype">
    <text evidence="3 4 6 8 10 11">Clustered stomatal pattern distribution in seedlings characterized by excessive numbers of small epidermal cells, due to impaired meristemoid mother cell (MMC) asymmetric division (PubMed:27746029). Abnormal non-polarized subcellular localization of POLAR and YDA in asymmetric dividing cells (PubMed:25843888, PubMed:30429609).</text>
</comment>
<comment type="sequence caution" evidence="14">
    <conflict type="erroneous gene model prediction">
        <sequence resource="EMBL-CDS" id="BAB10108"/>
    </conflict>
</comment>
<gene>
    <name evidence="13" type="primary">BASL</name>
    <name evidence="15" type="ordered locus">At5g60880</name>
    <name evidence="16" type="ORF">MAE1.13</name>
</gene>
<name>BASL_ARATH</name>
<sequence length="262" mass="29123">MASQWTIPKLVTWRVRDWASCFLACKIPLDGDEDGANNNGNTTNNNNLTFKRIKRKIKSTKKKRSERKLSLSPPGTRHHHLHLRSSSVSPTTSGSQHRRLSWPQPPVSEESGFIVFCFDREDGGFDVVKEGKQEKKETESSSEKSPRTVNRKLIYGDQGVGGTEKNNSPETKGTEQDQNDNTSCQGTKDVSSDVTERTKEEEDIDASDKSSGSSHSDEGRGSFAFPILGVEWMGSPAKMPESDDLSPKKQKPVALGFQCCRF</sequence>
<keyword id="KW-0025">Alternative splicing</keyword>
<keyword id="KW-0131">Cell cycle</keyword>
<keyword id="KW-0132">Cell division</keyword>
<keyword id="KW-1003">Cell membrane</keyword>
<keyword id="KW-0963">Cytoplasm</keyword>
<keyword id="KW-0472">Membrane</keyword>
<keyword id="KW-0539">Nucleus</keyword>
<keyword id="KW-0597">Phosphoprotein</keyword>
<keyword id="KW-1185">Reference proteome</keyword>
<reference key="1">
    <citation type="journal article" date="1998" name="DNA Res.">
        <title>Structural analysis of Arabidopsis thaliana chromosome 5. VII. Sequence features of the regions of 1,013,767 bp covered by sixteen physically assigned P1 and TAC clones.</title>
        <authorList>
            <person name="Nakamura Y."/>
            <person name="Sato S."/>
            <person name="Asamizu E."/>
            <person name="Kaneko T."/>
            <person name="Kotani H."/>
            <person name="Miyajima N."/>
            <person name="Tabata S."/>
        </authorList>
    </citation>
    <scope>NUCLEOTIDE SEQUENCE [LARGE SCALE GENOMIC DNA]</scope>
    <source>
        <strain>cv. Columbia</strain>
    </source>
</reference>
<reference key="2">
    <citation type="journal article" date="1997" name="DNA Res.">
        <title>Structural analysis of Arabidopsis thaliana chromosome 5. III. Sequence features of the regions of 1,191,918 bp covered by seventeen physically assigned P1 clones.</title>
        <authorList>
            <person name="Nakamura Y."/>
            <person name="Sato S."/>
            <person name="Kaneko T."/>
            <person name="Kotani H."/>
            <person name="Asamizu E."/>
            <person name="Miyajima N."/>
            <person name="Tabata S."/>
        </authorList>
    </citation>
    <scope>NUCLEOTIDE SEQUENCE [LARGE SCALE GENOMIC DNA]</scope>
    <source>
        <strain>cv. Columbia</strain>
    </source>
</reference>
<reference key="3">
    <citation type="journal article" date="2017" name="Plant J.">
        <title>Araport11: a complete reannotation of the Arabidopsis thaliana reference genome.</title>
        <authorList>
            <person name="Cheng C.Y."/>
            <person name="Krishnakumar V."/>
            <person name="Chan A.P."/>
            <person name="Thibaud-Nissen F."/>
            <person name="Schobel S."/>
            <person name="Town C.D."/>
        </authorList>
    </citation>
    <scope>GENOME REANNOTATION</scope>
    <source>
        <strain>cv. Columbia</strain>
    </source>
</reference>
<reference key="4">
    <citation type="journal article" date="2005" name="Plant Physiol.">
        <title>Analysis of the cDNAs of hypothetical genes on Arabidopsis chromosome 2 reveals numerous transcript variants.</title>
        <authorList>
            <person name="Xiao Y.-L."/>
            <person name="Smith S.R."/>
            <person name="Ishmael N."/>
            <person name="Redman J.C."/>
            <person name="Kumar N."/>
            <person name="Monaghan E.L."/>
            <person name="Ayele M."/>
            <person name="Haas B.J."/>
            <person name="Wu H.C."/>
            <person name="Town C.D."/>
        </authorList>
    </citation>
    <scope>NUCLEOTIDE SEQUENCE [LARGE SCALE MRNA] (ISOFORMS 1 AND 2)</scope>
    <source>
        <strain>cv. Columbia</strain>
    </source>
</reference>
<reference key="5">
    <citation type="submission" date="2005-02" db="EMBL/GenBank/DDBJ databases">
        <authorList>
            <person name="Underwood B.A."/>
            <person name="Xiao Y.-L."/>
            <person name="Moskal W.A. Jr."/>
            <person name="Monaghan E.L."/>
            <person name="Wang W."/>
            <person name="Redman J.C."/>
            <person name="Wu H.C."/>
            <person name="Utterback T."/>
            <person name="Town C.D."/>
        </authorList>
    </citation>
    <scope>NUCLEOTIDE SEQUENCE [LARGE SCALE MRNA] (ISOFORM 1)</scope>
    <source>
        <strain>cv. Columbia</strain>
    </source>
</reference>
<reference key="6">
    <citation type="journal article" date="2009" name="Cell">
        <title>BASL controls asymmetric cell division in Arabidopsis.</title>
        <authorList>
            <person name="Dong J."/>
            <person name="MacAlister C.A."/>
            <person name="Bergmann D.C."/>
        </authorList>
    </citation>
    <scope>FUNCTION</scope>
    <scope>DISRUPTION PHENOTYPE</scope>
    <scope>TISSUE SPECIFICITY</scope>
    <scope>SUBCELLULAR LOCATION</scope>
    <scope>DEVELOPMENTAL STAGE</scope>
    <source>
        <strain>cv. Columbia</strain>
    </source>
</reference>
<reference key="7">
    <citation type="journal article" date="2010" name="Curr. Top. Dev. Biol.">
        <title>Stomatal patterning and development.</title>
        <authorList>
            <person name="Dong J."/>
            <person name="Bergmann D.C."/>
        </authorList>
    </citation>
    <scope>REVIEW</scope>
</reference>
<reference key="8">
    <citation type="journal article" date="2010" name="Plant Signal. Behav.">
        <title>BASL and EPF2 act independently to regulate asymmetric divisions during stomatal development.</title>
        <authorList>
            <person name="Hunt L."/>
            <person name="Gray J.E."/>
        </authorList>
    </citation>
    <scope>FUNCTION</scope>
    <scope>DISRUPTION PHENOTYPE</scope>
    <source>
        <strain>cv. Columbia</strain>
    </source>
</reference>
<reference key="9">
    <citation type="journal article" date="2011" name="Plant Cell">
        <title>Molecular profiling of stomatal meristemoids reveals new component of asymmetric cell division and commonalities among stem cell populations in Arabidopsis.</title>
        <authorList>
            <person name="Pillitteri L.J."/>
            <person name="Peterson K.M."/>
            <person name="Horst R.J."/>
            <person name="Torii K.U."/>
        </authorList>
    </citation>
    <scope>FUNCTION</scope>
    <scope>DISRUPTION PHENOTYPE</scope>
</reference>
<reference key="10">
    <citation type="journal article" date="2011" name="Science">
        <title>Generation of spatial patterns through cell polarity switching.</title>
        <authorList>
            <person name="Robinson S."/>
            <person name="Barbier de Reuille P."/>
            <person name="Chan J."/>
            <person name="Bergmann D."/>
            <person name="Prusinkiewicz P."/>
            <person name="Coen E."/>
        </authorList>
    </citation>
    <scope>SUBCELLULAR LOCATION</scope>
</reference>
<reference key="11">
    <citation type="journal article" date="2012" name="Curr. Opin. Plant Biol.">
        <title>Division polarity in developing stomata.</title>
        <authorList>
            <person name="Facette M.R."/>
            <person name="Smith L.G."/>
        </authorList>
    </citation>
    <scope>REVIEW</scope>
</reference>
<reference key="12">
    <citation type="journal article" date="2013" name="Plant J.">
        <title>Timely expression of the Arabidopsis stoma-fate master regulator MUTE is required for specification of other epidermal cell types.</title>
        <authorList>
            <person name="Trivino M."/>
            <person name="Martin-Trillo M."/>
            <person name="Ballesteros I."/>
            <person name="Delgado D."/>
            <person name="de Marcos A."/>
            <person name="Desvoyes B."/>
            <person name="Gutierrez C."/>
            <person name="Mena M."/>
            <person name="Fenoll C."/>
        </authorList>
    </citation>
    <scope>INDUCTION BY MUTE</scope>
</reference>
<reference key="13">
    <citation type="journal article" date="2015" name="Dev. Cell">
        <title>The BASL polarity protein controls a MAPK signaling feedback loop in asymmetric cell division.</title>
        <authorList>
            <person name="Zhang Y."/>
            <person name="Wang P."/>
            <person name="Shao W."/>
            <person name="Zhu J.-K."/>
            <person name="Dong J."/>
        </authorList>
    </citation>
    <scope>FUNCTION</scope>
    <scope>DISRUPTION PHENOTYPE</scope>
    <scope>MUTAGENESIS OF 69-LEU--LEU-71; SER-72; SER-89; SER-145; SER-168; 223-PHE--PHE-225; SER-235; SER-246 AND 253-VAL--LEU-255</scope>
    <scope>PHOSPHORYLATION AT SER-89; SER-145; SER-168; SER-235 AND SER-246</scope>
    <scope>SUBCELLULAR LOCATION</scope>
    <scope>INTERACTION WITH YDA; MPK6 AND MKK5</scope>
    <source>
        <strain>cv. Columbia</strain>
    </source>
</reference>
<reference key="14">
    <citation type="journal article" date="2016" name="Curr. Biol.">
        <title>Phosphorylation of the polarity protein BASL differentiates asymmetric cell fate through MAPKs and SPCH.</title>
        <authorList>
            <person name="Zhang Y."/>
            <person name="Guo X."/>
            <person name="Dong J."/>
        </authorList>
    </citation>
    <scope>FUNCTION</scope>
    <scope>DISRUPTION PHENOTYPE</scope>
    <scope>PHOSPHORYLATION</scope>
    <scope>SUBCELLULAR LOCATION</scope>
    <scope>MUTAGENESIS OF SER-72; SER-89; SER-145; SER-168; SER-235 AND SER-246</scope>
    <scope>DEVELOPMENTAL STAGE</scope>
    <source>
        <strain>cv. Columbia</strain>
    </source>
</reference>
<reference key="15">
    <citation type="journal article" date="2016" name="J. Exp. Bot.">
        <title>Fine-scale dissection of the subdomains of polarity protein BASL in stomatal asymmetric cell division.</title>
        <authorList>
            <person name="Zhang Y."/>
            <person name="Bergmann D.C."/>
            <person name="Dong J."/>
        </authorList>
    </citation>
    <scope>SUBCELLULAR LOCATION</scope>
    <scope>MUTAGENESIS OF 51-LYS--ARG-64; 222-SER--PHE-262 AND 223-PHE--PHE-225</scope>
    <scope>TISSUE SPECIFICITY</scope>
    <source>
        <strain>cv. Columbia</strain>
    </source>
</reference>
<reference key="16">
    <citation type="journal article" date="2018" name="Nature">
        <title>POLAR-guided signalling complex assembly and localization drive asymmetric cell division.</title>
        <authorList>
            <person name="Houbaert A."/>
            <person name="Zhang C."/>
            <person name="Tiwari M."/>
            <person name="Wang K."/>
            <person name="de Marcos Serrano A."/>
            <person name="Savatin D.V."/>
            <person name="Urs M.J."/>
            <person name="Zhiponova M.K."/>
            <person name="Gudesblat G.E."/>
            <person name="Vanhoutte I."/>
            <person name="Eeckhout D."/>
            <person name="Boeren S."/>
            <person name="Karimi M."/>
            <person name="Betti C."/>
            <person name="Jacobs T."/>
            <person name="Fenoll C."/>
            <person name="Mena M."/>
            <person name="de Vries S."/>
            <person name="De Jaeger G."/>
            <person name="Russinova E."/>
        </authorList>
    </citation>
    <scope>FUNCTION</scope>
    <scope>INTERACTION WITH POLAR; ASK7/BIN2 AND ASK3/SK12</scope>
    <scope>SUBCELLULAR LOCATION</scope>
    <scope>DEVELOPMENTAL STAGE</scope>
    <scope>DISRUPTION PHENOTYPE</scope>
    <scope>PHOSPHORYLATION AT SER-72; SER-85; SER-86; SER-87; SER-89 AND THR-91</scope>
    <scope>MUTAGENESIS OF SER-72; SER-85; SER-86; SER-87; SER-89 AND THR-91</scope>
    <source>
        <strain>cv. Columbia</strain>
    </source>
</reference>
<organism>
    <name type="scientific">Arabidopsis thaliana</name>
    <name type="common">Mouse-ear cress</name>
    <dbReference type="NCBI Taxonomy" id="3702"/>
    <lineage>
        <taxon>Eukaryota</taxon>
        <taxon>Viridiplantae</taxon>
        <taxon>Streptophyta</taxon>
        <taxon>Embryophyta</taxon>
        <taxon>Tracheophyta</taxon>
        <taxon>Spermatophyta</taxon>
        <taxon>Magnoliopsida</taxon>
        <taxon>eudicotyledons</taxon>
        <taxon>Gunneridae</taxon>
        <taxon>Pentapetalae</taxon>
        <taxon>rosids</taxon>
        <taxon>malvids</taxon>
        <taxon>Brassicales</taxon>
        <taxon>Brassicaceae</taxon>
        <taxon>Camelineae</taxon>
        <taxon>Arabidopsis</taxon>
    </lineage>
</organism>
<feature type="chain" id="PRO_0000429315" description="Protein BREAKING OF ASYMMETRY IN THE STOMATAL LINEAGE">
    <location>
        <begin position="1"/>
        <end position="262"/>
    </location>
</feature>
<feature type="region of interest" description="Disordered" evidence="2">
    <location>
        <begin position="32"/>
        <end position="107"/>
    </location>
</feature>
<feature type="region of interest" description="Disordered" evidence="2">
    <location>
        <begin position="129"/>
        <end position="222"/>
    </location>
</feature>
<feature type="region of interest" description="Required for polarization at the cell cortex" evidence="9">
    <location>
        <begin position="222"/>
        <end position="262"/>
    </location>
</feature>
<feature type="short sequence motif" description="Nuclear localization signal 1" evidence="1 9">
    <location>
        <begin position="50"/>
        <end position="57"/>
    </location>
</feature>
<feature type="short sequence motif" description="Nuclear localization signal 2" evidence="9">
    <location>
        <begin position="61"/>
        <end position="68"/>
    </location>
</feature>
<feature type="short sequence motif" description="FxFP, required for cortical polarity formation" evidence="9">
    <location>
        <begin position="223"/>
        <end position="226"/>
    </location>
</feature>
<feature type="compositionally biased region" description="Low complexity" evidence="2">
    <location>
        <begin position="37"/>
        <end position="47"/>
    </location>
</feature>
<feature type="compositionally biased region" description="Basic residues" evidence="2">
    <location>
        <begin position="51"/>
        <end position="66"/>
    </location>
</feature>
<feature type="compositionally biased region" description="Low complexity" evidence="2">
    <location>
        <begin position="84"/>
        <end position="95"/>
    </location>
</feature>
<feature type="compositionally biased region" description="Basic and acidic residues" evidence="2">
    <location>
        <begin position="129"/>
        <end position="146"/>
    </location>
</feature>
<feature type="compositionally biased region" description="Polar residues" evidence="2">
    <location>
        <begin position="179"/>
        <end position="189"/>
    </location>
</feature>
<feature type="compositionally biased region" description="Basic and acidic residues" evidence="2">
    <location>
        <begin position="190"/>
        <end position="200"/>
    </location>
</feature>
<feature type="modified residue" description="Phosphoserine; by ASK7" evidence="11">
    <location>
        <position position="72"/>
    </location>
</feature>
<feature type="modified residue" description="Phosphoserine; by ASK7" evidence="11">
    <location>
        <position position="85"/>
    </location>
</feature>
<feature type="modified residue" description="Phosphoserine; by ASK7" evidence="11">
    <location>
        <position position="86"/>
    </location>
</feature>
<feature type="modified residue" description="Phosphoserine; by ASK7" evidence="11">
    <location>
        <position position="87"/>
    </location>
</feature>
<feature type="modified residue" description="Phosphoserine; by ASK7 and MPK6" evidence="8 11">
    <location>
        <position position="89"/>
    </location>
</feature>
<feature type="modified residue" description="Phosphothreonine; by ASK7" evidence="11">
    <location>
        <position position="91"/>
    </location>
</feature>
<feature type="modified residue" description="Phosphoserine; by MPK6" evidence="8">
    <location>
        <position position="145"/>
    </location>
</feature>
<feature type="modified residue" description="Phosphoserine; by MPK6" evidence="8">
    <location>
        <position position="168"/>
    </location>
</feature>
<feature type="modified residue" description="Phosphoserine; by MPK6" evidence="8">
    <location>
        <position position="235"/>
    </location>
</feature>
<feature type="modified residue" description="Phosphoserine; by MPK6" evidence="8">
    <location>
        <position position="246"/>
    </location>
</feature>
<feature type="splice variant" id="VSP_054867" description="In isoform 2." evidence="12">
    <original>RTKEEEDIDASD</original>
    <variation>VMLRNIFQLQSI</variation>
    <location>
        <begin position="197"/>
        <end position="208"/>
    </location>
</feature>
<feature type="splice variant" id="VSP_054868" description="In isoform 2." evidence="12">
    <location>
        <begin position="209"/>
        <end position="262"/>
    </location>
</feature>
<feature type="mutagenesis site" description="In BASL_NLS; impaired nuclear localization, but diffuse accumulation in the cytoplasm and polarized at the cell cortex in stomatal asymmetric cell division (ACD) cells. Can rescue disruption phenotypes." evidence="9">
    <location>
        <begin position="51"/>
        <end position="64"/>
    </location>
</feature>
<feature type="mutagenesis site" description="In BASL-d1; impaired cortical polar accumulation and stomata defects, reduced interaction with YDA and fails to induce polarization; when associated with 223-AAA-225 and 253-AAA-255." evidence="8">
    <original>LSL</original>
    <variation>ASA</variation>
    <location>
        <begin position="69"/>
        <end position="71"/>
    </location>
</feature>
<feature type="mutagenesis site" description="Reduced ASK7-mediated phosphorylation and impaired polarized subcellular localization. Reduced interaction with YDA and fails to induce polarization; when associated with A-89, A-145, A-168, A-235 and A-246." evidence="8 10 11">
    <original>S</original>
    <variation>A</variation>
    <location>
        <position position="72"/>
    </location>
</feature>
<feature type="mutagenesis site" description="In BASL_123456D; phosphomimetic, increased interaction with YDA and promoted polarization; when associated with D-89, D-145, D-168, D-235 and D-246. In BASL_14D; reduced mobility leading to severely retarded recovery at the cell cortex and prolonged accumulation even in mature pavement cells, and impaired stomatal production due to suppressed SLGC division potential; when associated with D-89." evidence="8 10">
    <original>S</original>
    <variation>D</variation>
    <location>
        <position position="72"/>
    </location>
</feature>
<feature type="mutagenesis site" description="Reduced ASK7-mediated phosphorylation; when associated with A-86, A-87, A-89 and A-91." evidence="11">
    <original>S</original>
    <variation>A</variation>
    <location>
        <position position="85"/>
    </location>
</feature>
<feature type="mutagenesis site" description="Reduced ASK7-mediated phosphorylation; when associated with A-85, A-87, A-89 and A-91." evidence="11">
    <original>S</original>
    <variation>A</variation>
    <location>
        <position position="86"/>
    </location>
</feature>
<feature type="mutagenesis site" description="Reduced ASK7-mediated phosphorylation; when associated with A-85, A-86, A-89 and A-91." evidence="11">
    <original>S</original>
    <variation>A</variation>
    <location>
        <position position="87"/>
    </location>
</feature>
<feature type="mutagenesis site" description="Reduced ASK7-mediated phosphorylation; when associated with A-85, A-86, A-87 and A-91. Abrogated MPK3/MPK6-mediated phosphorylation and abnormal nuclear retention associated with impaired cortical polar accumulation; when associated with A-145, A-168, A-235 and A-246. Reduced interaction with YDA and fails to induce polarization; when associated with A-72, A-145, A-168, A-235 and A-246." evidence="8 10 11">
    <original>S</original>
    <variation>A</variation>
    <location>
        <position position="89"/>
    </location>
</feature>
<feature type="mutagenesis site" description="In BASL_123456D; phosphomimetic, increased interaction with YDA and promoted polarization; when associated with D-72, D-145, D-168, D-235 and D-246. In BASL_14D; reduced mobility leading to severely retarded recovery at the cell cortex and prolonged accumulation even in mature pavement cells, and impaired stomatal production due to suppressed SLGC division potential; when associated with D-72." evidence="8 10">
    <original>S</original>
    <variation>D</variation>
    <location>
        <position position="89"/>
    </location>
</feature>
<feature type="mutagenesis site" description="Reduced ASK7-mediated phosphorylation; when associated with A-85, A-86, A-87 and A-89." evidence="11">
    <original>T</original>
    <variation>A</variation>
    <location>
        <position position="91"/>
    </location>
</feature>
<feature type="mutagenesis site" description="Abrogated MPK3/MPK6-mediated phosphorylation and abnormal nuclear retention associated with impaired cortical polar accumulation; when associated with A-89, A-168, A-235 and A-246. Reduced interaction with YDA and fails to induce polarization; when associated with A-72, A-89, A-168, A-235 and A-246." evidence="8 10">
    <original>S</original>
    <variation>A</variation>
    <location>
        <position position="145"/>
    </location>
</feature>
<feature type="mutagenesis site" description="In BASL_123456D; phosphomimetic, increased interaction with YDA and promoted polarization; when associated with D-72, D-89, D-168, D-235 and D-246." evidence="8 10">
    <original>S</original>
    <variation>D</variation>
    <location>
        <position position="145"/>
    </location>
</feature>
<feature type="mutagenesis site" description="Abrogated MPK3/MPK6-mediated phosphorylation and abnormal nuclear retention associated with impaired cortical polar accumulation; when associated with A-89, A-145, A-235 and A-246. Reduced interaction with YDA and fails to induce polarization; when associated with A-72, A-89, A-145, A-235 and A-246." evidence="8 10">
    <original>S</original>
    <variation>A</variation>
    <location>
        <position position="168"/>
    </location>
</feature>
<feature type="mutagenesis site" description="In BASL_123456D; phosphomimetic, increased interaction with YDA and promoted polarization; when associated with D-72, D-89, D-145, D-235 and D-246." evidence="8 10">
    <original>S</original>
    <variation>D</variation>
    <location>
        <position position="168"/>
    </location>
</feature>
<feature type="mutagenesis site" description="In BASL_d41; impaired polarization at the cell cortex but accumulation in cytoplasm and nucleus. Cannot complement disruption phenotype." evidence="9">
    <location>
        <begin position="222"/>
        <end position="262"/>
    </location>
</feature>
<feature type="mutagenesis site" description="In BASL-def; impaired cortical polar accumulation and stomata defects, reduced interaction with YDA and fails to induce polarization; when associated with 69-ASA-71 and 253-AAA-255." evidence="8 9">
    <original>FAF</original>
    <variation>AAA</variation>
    <location>
        <begin position="223"/>
        <end position="225"/>
    </location>
</feature>
<feature type="mutagenesis site" description="Abrogated MPK3/MPK6-mediated phosphorylation and abnormal nuclear retention associated with impaired cortical polar accumulation; when associated with A-89, A-145, A-168 and A-246. Reduced interaction with YDA and fails to induce polarization; when associated with A-72, A-89, A-145, A-168 and A-246." evidence="8 10">
    <original>S</original>
    <variation>A</variation>
    <location>
        <position position="235"/>
    </location>
</feature>
<feature type="mutagenesis site" description="In BASL_123456D; phosphomimetic, increased interaction with YDA and promoted polarization; when associated with D-72, D-89, D-145, D-168 and D-246." evidence="8 10">
    <original>S</original>
    <variation>D</variation>
    <location>
        <position position="235"/>
    </location>
</feature>
<feature type="mutagenesis site" description="Abrogated MPK3/MPK6-mediated phosphorylation and abnormal nuclear retention associated with impaired cortical polar accumulation; when associated with A-89, A-145, A-168 and A-235. Reduced interaction with YDA and fails to induce polarization; when associated with A-72, A-89, A-145, A-168 and A-235." evidence="8 10">
    <original>S</original>
    <variation>A</variation>
    <location>
        <position position="246"/>
    </location>
</feature>
<feature type="mutagenesis site" description="In BASL_123456D; phosphomimetic, increased interaction with YDA and promoted polarization; when associated with D-72, D-89, D-145, D-168 and D-235." evidence="8 10">
    <original>S</original>
    <variation>D</variation>
    <location>
        <position position="246"/>
    </location>
</feature>
<feature type="mutagenesis site" description="In basl-d2; impaired cortical polar accumulation and stomata defects, reduced interaction with YDA and fails to induce polarization; when associated with 69-ASA-71 and 223-AAA-225." evidence="8">
    <original>VAL</original>
    <variation>AAA</variation>
    <location>
        <begin position="253"/>
        <end position="255"/>
    </location>
</feature>
<evidence type="ECO:0000255" key="1">
    <source>
        <dbReference type="PROSITE-ProRule" id="PRU00768"/>
    </source>
</evidence>
<evidence type="ECO:0000256" key="2">
    <source>
        <dbReference type="SAM" id="MobiDB-lite"/>
    </source>
</evidence>
<evidence type="ECO:0000269" key="3">
    <source>
    </source>
</evidence>
<evidence type="ECO:0000269" key="4">
    <source>
    </source>
</evidence>
<evidence type="ECO:0000269" key="5">
    <source>
    </source>
</evidence>
<evidence type="ECO:0000269" key="6">
    <source>
    </source>
</evidence>
<evidence type="ECO:0000269" key="7">
    <source>
    </source>
</evidence>
<evidence type="ECO:0000269" key="8">
    <source>
    </source>
</evidence>
<evidence type="ECO:0000269" key="9">
    <source>
    </source>
</evidence>
<evidence type="ECO:0000269" key="10">
    <source>
    </source>
</evidence>
<evidence type="ECO:0000269" key="11">
    <source>
    </source>
</evidence>
<evidence type="ECO:0000303" key="12">
    <source>
    </source>
</evidence>
<evidence type="ECO:0000303" key="13">
    <source>
    </source>
</evidence>
<evidence type="ECO:0000305" key="14"/>
<evidence type="ECO:0000312" key="15">
    <source>
        <dbReference type="Araport" id="AT5G60880"/>
    </source>
</evidence>
<evidence type="ECO:0000312" key="16">
    <source>
        <dbReference type="EMBL" id="BAB10108.1"/>
    </source>
</evidence>